<organism>
    <name type="scientific">Arabidopsis thaliana</name>
    <name type="common">Mouse-ear cress</name>
    <dbReference type="NCBI Taxonomy" id="3702"/>
    <lineage>
        <taxon>Eukaryota</taxon>
        <taxon>Viridiplantae</taxon>
        <taxon>Streptophyta</taxon>
        <taxon>Embryophyta</taxon>
        <taxon>Tracheophyta</taxon>
        <taxon>Spermatophyta</taxon>
        <taxon>Magnoliopsida</taxon>
        <taxon>eudicotyledons</taxon>
        <taxon>Gunneridae</taxon>
        <taxon>Pentapetalae</taxon>
        <taxon>rosids</taxon>
        <taxon>malvids</taxon>
        <taxon>Brassicales</taxon>
        <taxon>Brassicaceae</taxon>
        <taxon>Camelineae</taxon>
        <taxon>Arabidopsis</taxon>
    </lineage>
</organism>
<name>AGL97_ARATH</name>
<gene>
    <name type="primary">AGL97</name>
    <name type="ordered locus">At1g46408</name>
    <name type="ORF">F2G19.10</name>
</gene>
<feature type="chain" id="PRO_0000363655" description="Agamous-like MADS-box protein AGL97">
    <location>
        <begin position="1"/>
        <end position="266"/>
    </location>
</feature>
<feature type="domain" description="MADS-box" evidence="2">
    <location>
        <begin position="3"/>
        <end position="63"/>
    </location>
</feature>
<feature type="coiled-coil region" evidence="1">
    <location>
        <begin position="88"/>
        <end position="130"/>
    </location>
</feature>
<reference key="1">
    <citation type="journal article" date="2000" name="Nature">
        <title>Sequence and analysis of chromosome 1 of the plant Arabidopsis thaliana.</title>
        <authorList>
            <person name="Theologis A."/>
            <person name="Ecker J.R."/>
            <person name="Palm C.J."/>
            <person name="Federspiel N.A."/>
            <person name="Kaul S."/>
            <person name="White O."/>
            <person name="Alonso J."/>
            <person name="Altafi H."/>
            <person name="Araujo R."/>
            <person name="Bowman C.L."/>
            <person name="Brooks S.Y."/>
            <person name="Buehler E."/>
            <person name="Chan A."/>
            <person name="Chao Q."/>
            <person name="Chen H."/>
            <person name="Cheuk R.F."/>
            <person name="Chin C.W."/>
            <person name="Chung M.K."/>
            <person name="Conn L."/>
            <person name="Conway A.B."/>
            <person name="Conway A.R."/>
            <person name="Creasy T.H."/>
            <person name="Dewar K."/>
            <person name="Dunn P."/>
            <person name="Etgu P."/>
            <person name="Feldblyum T.V."/>
            <person name="Feng J.-D."/>
            <person name="Fong B."/>
            <person name="Fujii C.Y."/>
            <person name="Gill J.E."/>
            <person name="Goldsmith A.D."/>
            <person name="Haas B."/>
            <person name="Hansen N.F."/>
            <person name="Hughes B."/>
            <person name="Huizar L."/>
            <person name="Hunter J.L."/>
            <person name="Jenkins J."/>
            <person name="Johnson-Hopson C."/>
            <person name="Khan S."/>
            <person name="Khaykin E."/>
            <person name="Kim C.J."/>
            <person name="Koo H.L."/>
            <person name="Kremenetskaia I."/>
            <person name="Kurtz D.B."/>
            <person name="Kwan A."/>
            <person name="Lam B."/>
            <person name="Langin-Hooper S."/>
            <person name="Lee A."/>
            <person name="Lee J.M."/>
            <person name="Lenz C.A."/>
            <person name="Li J.H."/>
            <person name="Li Y.-P."/>
            <person name="Lin X."/>
            <person name="Liu S.X."/>
            <person name="Liu Z.A."/>
            <person name="Luros J.S."/>
            <person name="Maiti R."/>
            <person name="Marziali A."/>
            <person name="Militscher J."/>
            <person name="Miranda M."/>
            <person name="Nguyen M."/>
            <person name="Nierman W.C."/>
            <person name="Osborne B.I."/>
            <person name="Pai G."/>
            <person name="Peterson J."/>
            <person name="Pham P.K."/>
            <person name="Rizzo M."/>
            <person name="Rooney T."/>
            <person name="Rowley D."/>
            <person name="Sakano H."/>
            <person name="Salzberg S.L."/>
            <person name="Schwartz J.R."/>
            <person name="Shinn P."/>
            <person name="Southwick A.M."/>
            <person name="Sun H."/>
            <person name="Tallon L.J."/>
            <person name="Tambunga G."/>
            <person name="Toriumi M.J."/>
            <person name="Town C.D."/>
            <person name="Utterback T."/>
            <person name="Van Aken S."/>
            <person name="Vaysberg M."/>
            <person name="Vysotskaia V.S."/>
            <person name="Walker M."/>
            <person name="Wu D."/>
            <person name="Yu G."/>
            <person name="Fraser C.M."/>
            <person name="Venter J.C."/>
            <person name="Davis R.W."/>
        </authorList>
    </citation>
    <scope>NUCLEOTIDE SEQUENCE [LARGE SCALE GENOMIC DNA]</scope>
    <source>
        <strain>cv. Columbia</strain>
    </source>
</reference>
<reference key="2">
    <citation type="journal article" date="2017" name="Plant J.">
        <title>Araport11: a complete reannotation of the Arabidopsis thaliana reference genome.</title>
        <authorList>
            <person name="Cheng C.Y."/>
            <person name="Krishnakumar V."/>
            <person name="Chan A.P."/>
            <person name="Thibaud-Nissen F."/>
            <person name="Schobel S."/>
            <person name="Town C.D."/>
        </authorList>
    </citation>
    <scope>GENOME REANNOTATION</scope>
    <source>
        <strain>cv. Columbia</strain>
    </source>
</reference>
<reference key="3">
    <citation type="submission" date="2009-03" db="EMBL/GenBank/DDBJ databases">
        <title>ORF cloning and analysis of Arabidopsis transcription factor genes.</title>
        <authorList>
            <person name="Fujita M."/>
            <person name="Mizukado S."/>
            <person name="Seki M."/>
            <person name="Shinozaki K."/>
            <person name="Mitsuda N."/>
            <person name="Takiguchi Y."/>
            <person name="Takagi M."/>
        </authorList>
    </citation>
    <scope>NUCLEOTIDE SEQUENCE [LARGE SCALE GENOMIC DNA]</scope>
</reference>
<reference key="4">
    <citation type="journal article" date="2005" name="Plant Cell">
        <title>Comprehensive interaction map of the Arabidopsis MADS Box transcription factors.</title>
        <authorList>
            <person name="de Folter S."/>
            <person name="Immink R.G.H."/>
            <person name="Kieffer M."/>
            <person name="Parenicova L."/>
            <person name="Henz S.R."/>
            <person name="Weigel D."/>
            <person name="Busscher M."/>
            <person name="Kooiker M."/>
            <person name="Colombo L."/>
            <person name="Kater M.M."/>
            <person name="Davies B."/>
            <person name="Angenent G.C."/>
        </authorList>
    </citation>
    <scope>INTERACTION WITH AGL27 AND AGL62</scope>
</reference>
<evidence type="ECO:0000255" key="1"/>
<evidence type="ECO:0000255" key="2">
    <source>
        <dbReference type="PROSITE-ProRule" id="PRU00251"/>
    </source>
</evidence>
<evidence type="ECO:0000269" key="3">
    <source>
    </source>
</evidence>
<sequence length="266" mass="29853">MGGVKRKIAIEKIQNKNPRAVSFSKRRKGLYSKASELCLLSDAEIAIIATPVSSNSNAAFYSFGHSSVDNVVAAFLANQRPCDERFWWEDESLLKSENLEELREAMDSMSTMLRDLKELEKQRDHQTQTLIHQPCSARVCIQDYVTVNFDGFNTEEQTLAVSDNSNNNGLLGNLDECNEDFDDLDQIFDTVTNSEFLSVNLEMDDVTVNSEGNTEEQTLAVSDNSNNNGLLGNLDECNEDFDDLDQIIEYLTSSEALSMNLKMDDV</sequence>
<accession>Q9C633</accession>
<accession>C0SUZ7</accession>
<comment type="function">
    <text>Putative transcription factor.</text>
</comment>
<comment type="subunit">
    <text evidence="3">Interacts with AGL27 and AGL62.</text>
</comment>
<comment type="subcellular location">
    <subcellularLocation>
        <location evidence="2">Nucleus</location>
    </subcellularLocation>
</comment>
<dbReference type="EMBL" id="AC083835">
    <property type="protein sequence ID" value="AAG50617.1"/>
    <property type="molecule type" value="Genomic_DNA"/>
</dbReference>
<dbReference type="EMBL" id="CP002684">
    <property type="protein sequence ID" value="AEE32126.1"/>
    <property type="molecule type" value="Genomic_DNA"/>
</dbReference>
<dbReference type="EMBL" id="AB493500">
    <property type="protein sequence ID" value="BAH30338.1"/>
    <property type="molecule type" value="Genomic_DNA"/>
</dbReference>
<dbReference type="PIR" id="E96511">
    <property type="entry name" value="E96511"/>
</dbReference>
<dbReference type="RefSeq" id="NP_175144.1">
    <property type="nucleotide sequence ID" value="NM_103604.2"/>
</dbReference>
<dbReference type="SMR" id="Q9C633"/>
<dbReference type="BioGRID" id="26337">
    <property type="interactions" value="23"/>
</dbReference>
<dbReference type="FunCoup" id="Q9C633">
    <property type="interactions" value="43"/>
</dbReference>
<dbReference type="IntAct" id="Q9C633">
    <property type="interactions" value="21"/>
</dbReference>
<dbReference type="STRING" id="3702.Q9C633"/>
<dbReference type="PaxDb" id="3702-AT1G46408.1"/>
<dbReference type="EnsemblPlants" id="AT1G46408.1">
    <property type="protein sequence ID" value="AT1G46408.1"/>
    <property type="gene ID" value="AT1G46408"/>
</dbReference>
<dbReference type="GeneID" id="841112"/>
<dbReference type="Gramene" id="AT1G46408.1">
    <property type="protein sequence ID" value="AT1G46408.1"/>
    <property type="gene ID" value="AT1G46408"/>
</dbReference>
<dbReference type="KEGG" id="ath:AT1G46408"/>
<dbReference type="Araport" id="AT1G46408"/>
<dbReference type="TAIR" id="AT1G46408">
    <property type="gene designation" value="AGL97"/>
</dbReference>
<dbReference type="eggNOG" id="KOG0014">
    <property type="taxonomic scope" value="Eukaryota"/>
</dbReference>
<dbReference type="HOGENOM" id="CLU_074925_0_0_1"/>
<dbReference type="InParanoid" id="Q9C633"/>
<dbReference type="OMA" id="NLDECNE"/>
<dbReference type="PhylomeDB" id="Q9C633"/>
<dbReference type="PRO" id="PR:Q9C633"/>
<dbReference type="Proteomes" id="UP000006548">
    <property type="component" value="Chromosome 1"/>
</dbReference>
<dbReference type="ExpressionAtlas" id="Q9C633">
    <property type="expression patterns" value="baseline and differential"/>
</dbReference>
<dbReference type="GO" id="GO:0005634">
    <property type="term" value="C:nucleus"/>
    <property type="evidence" value="ECO:0007669"/>
    <property type="project" value="UniProtKB-SubCell"/>
</dbReference>
<dbReference type="GO" id="GO:0000987">
    <property type="term" value="F:cis-regulatory region sequence-specific DNA binding"/>
    <property type="evidence" value="ECO:0007669"/>
    <property type="project" value="InterPro"/>
</dbReference>
<dbReference type="GO" id="GO:0003700">
    <property type="term" value="F:DNA-binding transcription factor activity"/>
    <property type="evidence" value="ECO:0000250"/>
    <property type="project" value="TAIR"/>
</dbReference>
<dbReference type="GO" id="GO:0000981">
    <property type="term" value="F:DNA-binding transcription factor activity, RNA polymerase II-specific"/>
    <property type="evidence" value="ECO:0007669"/>
    <property type="project" value="InterPro"/>
</dbReference>
<dbReference type="GO" id="GO:0046983">
    <property type="term" value="F:protein dimerization activity"/>
    <property type="evidence" value="ECO:0007669"/>
    <property type="project" value="InterPro"/>
</dbReference>
<dbReference type="GO" id="GO:0045944">
    <property type="term" value="P:positive regulation of transcription by RNA polymerase II"/>
    <property type="evidence" value="ECO:0007669"/>
    <property type="project" value="InterPro"/>
</dbReference>
<dbReference type="CDD" id="cd00266">
    <property type="entry name" value="MADS_SRF_like"/>
    <property type="match status" value="1"/>
</dbReference>
<dbReference type="FunFam" id="3.40.1810.10:FF:000023">
    <property type="entry name" value="MADS-box protein-like"/>
    <property type="match status" value="1"/>
</dbReference>
<dbReference type="Gene3D" id="3.40.1810.10">
    <property type="entry name" value="Transcription factor, MADS-box"/>
    <property type="match status" value="1"/>
</dbReference>
<dbReference type="InterPro" id="IPR033897">
    <property type="entry name" value="SRF-like_MADS-box"/>
</dbReference>
<dbReference type="InterPro" id="IPR002100">
    <property type="entry name" value="TF_MADSbox"/>
</dbReference>
<dbReference type="InterPro" id="IPR036879">
    <property type="entry name" value="TF_MADSbox_sf"/>
</dbReference>
<dbReference type="PANTHER" id="PTHR11945:SF702">
    <property type="entry name" value="AGAMOUS-LIKE 83-RELATED"/>
    <property type="match status" value="1"/>
</dbReference>
<dbReference type="PANTHER" id="PTHR11945">
    <property type="entry name" value="MADS BOX PROTEIN"/>
    <property type="match status" value="1"/>
</dbReference>
<dbReference type="Pfam" id="PF00319">
    <property type="entry name" value="SRF-TF"/>
    <property type="match status" value="1"/>
</dbReference>
<dbReference type="PRINTS" id="PR00404">
    <property type="entry name" value="MADSDOMAIN"/>
</dbReference>
<dbReference type="SMART" id="SM00432">
    <property type="entry name" value="MADS"/>
    <property type="match status" value="1"/>
</dbReference>
<dbReference type="SUPFAM" id="SSF55455">
    <property type="entry name" value="SRF-like"/>
    <property type="match status" value="1"/>
</dbReference>
<dbReference type="PROSITE" id="PS50066">
    <property type="entry name" value="MADS_BOX_2"/>
    <property type="match status" value="1"/>
</dbReference>
<protein>
    <recommendedName>
        <fullName>Agamous-like MADS-box protein AGL97</fullName>
    </recommendedName>
</protein>
<proteinExistence type="evidence at protein level"/>
<keyword id="KW-0175">Coiled coil</keyword>
<keyword id="KW-0238">DNA-binding</keyword>
<keyword id="KW-0539">Nucleus</keyword>
<keyword id="KW-1185">Reference proteome</keyword>
<keyword id="KW-0804">Transcription</keyword>
<keyword id="KW-0805">Transcription regulation</keyword>